<gene>
    <name type="ordered locus">BQ2027_MB1438C</name>
</gene>
<dbReference type="EMBL" id="LT708304">
    <property type="protein sequence ID" value="SIU00041.1"/>
    <property type="molecule type" value="Genomic_DNA"/>
</dbReference>
<dbReference type="RefSeq" id="NP_855090.1">
    <property type="nucleotide sequence ID" value="NC_002945.3"/>
</dbReference>
<dbReference type="RefSeq" id="WP_003407292.1">
    <property type="nucleotide sequence ID" value="NC_002945.4"/>
</dbReference>
<dbReference type="SMR" id="P64840"/>
<dbReference type="KEGG" id="mbo:BQ2027_MB1438C"/>
<dbReference type="PATRIC" id="fig|233413.5.peg.1573"/>
<dbReference type="Proteomes" id="UP000001419">
    <property type="component" value="Chromosome"/>
</dbReference>
<dbReference type="GO" id="GO:0008168">
    <property type="term" value="F:methyltransferase activity"/>
    <property type="evidence" value="ECO:0007669"/>
    <property type="project" value="TreeGrafter"/>
</dbReference>
<dbReference type="CDD" id="cd02440">
    <property type="entry name" value="AdoMet_MTases"/>
    <property type="match status" value="1"/>
</dbReference>
<dbReference type="Gene3D" id="3.40.50.150">
    <property type="entry name" value="Vaccinia Virus protein VP39"/>
    <property type="match status" value="1"/>
</dbReference>
<dbReference type="InterPro" id="IPR041698">
    <property type="entry name" value="Methyltransf_25"/>
</dbReference>
<dbReference type="InterPro" id="IPR029063">
    <property type="entry name" value="SAM-dependent_MTases_sf"/>
</dbReference>
<dbReference type="PANTHER" id="PTHR43591:SF24">
    <property type="entry name" value="2-METHOXY-6-POLYPRENYL-1,4-BENZOQUINOL METHYLASE, MITOCHONDRIAL"/>
    <property type="match status" value="1"/>
</dbReference>
<dbReference type="PANTHER" id="PTHR43591">
    <property type="entry name" value="METHYLTRANSFERASE"/>
    <property type="match status" value="1"/>
</dbReference>
<dbReference type="Pfam" id="PF13649">
    <property type="entry name" value="Methyltransf_25"/>
    <property type="match status" value="1"/>
</dbReference>
<dbReference type="SUPFAM" id="SSF53335">
    <property type="entry name" value="S-adenosyl-L-methionine-dependent methyltransferases"/>
    <property type="match status" value="1"/>
</dbReference>
<accession>P64840</accession>
<accession>A0A1R3XY86</accession>
<accession>P71671</accession>
<accession>X2BHU0</accession>
<keyword id="KW-1185">Reference proteome</keyword>
<keyword id="KW-0732">Signal</keyword>
<feature type="signal peptide" evidence="1">
    <location>
        <begin position="1"/>
        <end position="30"/>
    </location>
</feature>
<feature type="chain" id="PRO_0000014102" description="Uncharacterized protein Mb1438c">
    <location>
        <begin position="31"/>
        <end position="274"/>
    </location>
</feature>
<organism>
    <name type="scientific">Mycobacterium bovis (strain ATCC BAA-935 / AF2122/97)</name>
    <dbReference type="NCBI Taxonomy" id="233413"/>
    <lineage>
        <taxon>Bacteria</taxon>
        <taxon>Bacillati</taxon>
        <taxon>Actinomycetota</taxon>
        <taxon>Actinomycetes</taxon>
        <taxon>Mycobacteriales</taxon>
        <taxon>Mycobacteriaceae</taxon>
        <taxon>Mycobacterium</taxon>
        <taxon>Mycobacterium tuberculosis complex</taxon>
    </lineage>
</organism>
<evidence type="ECO:0000255" key="1"/>
<evidence type="ECO:0000305" key="2"/>
<proteinExistence type="inferred from homology"/>
<sequence>MTVYTPTSERQAPATTHRQMWALGDYAAIAEELLAPLGPILVSTSGIRRGDRVLDVAAGSGNVSIPAAMAGAHVTASDLTPELLRRAQARAAAAGLELGWREANAEALPFSAGEFDAVLSTIGVMFAPRHQRTADELARVCRRGGKISTLNWTPEGFYGKLLSTIRPYRPTLPAGAPHEVWWGSEDYVSGLFRDHVSDIRTRRGSLTVDRFGCPDECRDYFKNFYGPAINAYRSIADSPECVATLDAEITELCREYLCDGVMQWEYLIFTARKC</sequence>
<protein>
    <recommendedName>
        <fullName>Uncharacterized protein Mb1438c</fullName>
    </recommendedName>
</protein>
<name>Y1438_MYCBO</name>
<reference key="1">
    <citation type="journal article" date="2003" name="Proc. Natl. Acad. Sci. U.S.A.">
        <title>The complete genome sequence of Mycobacterium bovis.</title>
        <authorList>
            <person name="Garnier T."/>
            <person name="Eiglmeier K."/>
            <person name="Camus J.-C."/>
            <person name="Medina N."/>
            <person name="Mansoor H."/>
            <person name="Pryor M."/>
            <person name="Duthoy S."/>
            <person name="Grondin S."/>
            <person name="Lacroix C."/>
            <person name="Monsempe C."/>
            <person name="Simon S."/>
            <person name="Harris B."/>
            <person name="Atkin R."/>
            <person name="Doggett J."/>
            <person name="Mayes R."/>
            <person name="Keating L."/>
            <person name="Wheeler P.R."/>
            <person name="Parkhill J."/>
            <person name="Barrell B.G."/>
            <person name="Cole S.T."/>
            <person name="Gordon S.V."/>
            <person name="Hewinson R.G."/>
        </authorList>
    </citation>
    <scope>NUCLEOTIDE SEQUENCE [LARGE SCALE GENOMIC DNA]</scope>
    <source>
        <strain>ATCC BAA-935 / AF2122/97</strain>
    </source>
</reference>
<reference key="2">
    <citation type="journal article" date="2017" name="Genome Announc.">
        <title>Updated reference genome sequence and annotation of Mycobacterium bovis AF2122/97.</title>
        <authorList>
            <person name="Malone K.M."/>
            <person name="Farrell D."/>
            <person name="Stuber T.P."/>
            <person name="Schubert O.T."/>
            <person name="Aebersold R."/>
            <person name="Robbe-Austerman S."/>
            <person name="Gordon S.V."/>
        </authorList>
    </citation>
    <scope>NUCLEOTIDE SEQUENCE [LARGE SCALE GENOMIC DNA]</scope>
    <scope>GENOME REANNOTATION</scope>
    <source>
        <strain>ATCC BAA-935 / AF2122/97</strain>
    </source>
</reference>
<comment type="similarity">
    <text evidence="2">To M.tuberculosis Rv1405c.</text>
</comment>